<evidence type="ECO:0000255" key="1">
    <source>
        <dbReference type="HAMAP-Rule" id="MF_00210"/>
    </source>
</evidence>
<reference key="1">
    <citation type="journal article" date="2007" name="Nat. Biotechnol.">
        <title>Comparative analysis of the complete genome sequence of the plant growth-promoting bacterium Bacillus amyloliquefaciens FZB42.</title>
        <authorList>
            <person name="Chen X.H."/>
            <person name="Koumoutsi A."/>
            <person name="Scholz R."/>
            <person name="Eisenreich A."/>
            <person name="Schneider K."/>
            <person name="Heinemeyer I."/>
            <person name="Morgenstern B."/>
            <person name="Voss B."/>
            <person name="Hess W.R."/>
            <person name="Reva O."/>
            <person name="Junge H."/>
            <person name="Voigt B."/>
            <person name="Jungblut P.R."/>
            <person name="Vater J."/>
            <person name="Suessmuth R."/>
            <person name="Liesegang H."/>
            <person name="Strittmatter A."/>
            <person name="Gottschalk G."/>
            <person name="Borriss R."/>
        </authorList>
    </citation>
    <scope>NUCLEOTIDE SEQUENCE [LARGE SCALE GENOMIC DNA]</scope>
    <source>
        <strain>DSM 23117 / BGSC 10A6 / LMG 26770 / FZB42</strain>
    </source>
</reference>
<feature type="chain" id="PRO_0000325330" description="3-phosphoshikimate 1-carboxyvinyltransferase">
    <location>
        <begin position="1"/>
        <end position="428"/>
    </location>
</feature>
<feature type="active site" description="Proton acceptor" evidence="1">
    <location>
        <position position="312"/>
    </location>
</feature>
<feature type="binding site" evidence="1">
    <location>
        <position position="19"/>
    </location>
    <ligand>
        <name>3-phosphoshikimate</name>
        <dbReference type="ChEBI" id="CHEBI:145989"/>
    </ligand>
</feature>
<feature type="binding site" evidence="1">
    <location>
        <position position="19"/>
    </location>
    <ligand>
        <name>phosphoenolpyruvate</name>
        <dbReference type="ChEBI" id="CHEBI:58702"/>
    </ligand>
</feature>
<feature type="binding site" evidence="1">
    <location>
        <position position="20"/>
    </location>
    <ligand>
        <name>3-phosphoshikimate</name>
        <dbReference type="ChEBI" id="CHEBI:145989"/>
    </ligand>
</feature>
<feature type="binding site" evidence="1">
    <location>
        <position position="24"/>
    </location>
    <ligand>
        <name>3-phosphoshikimate</name>
        <dbReference type="ChEBI" id="CHEBI:145989"/>
    </ligand>
</feature>
<feature type="binding site" evidence="1">
    <location>
        <position position="91"/>
    </location>
    <ligand>
        <name>phosphoenolpyruvate</name>
        <dbReference type="ChEBI" id="CHEBI:58702"/>
    </ligand>
</feature>
<feature type="binding site" evidence="1">
    <location>
        <position position="119"/>
    </location>
    <ligand>
        <name>phosphoenolpyruvate</name>
        <dbReference type="ChEBI" id="CHEBI:58702"/>
    </ligand>
</feature>
<feature type="binding site" evidence="1">
    <location>
        <position position="164"/>
    </location>
    <ligand>
        <name>3-phosphoshikimate</name>
        <dbReference type="ChEBI" id="CHEBI:145989"/>
    </ligand>
</feature>
<feature type="binding site" evidence="1">
    <location>
        <position position="166"/>
    </location>
    <ligand>
        <name>3-phosphoshikimate</name>
        <dbReference type="ChEBI" id="CHEBI:145989"/>
    </ligand>
</feature>
<feature type="binding site" evidence="1">
    <location>
        <position position="166"/>
    </location>
    <ligand>
        <name>phosphoenolpyruvate</name>
        <dbReference type="ChEBI" id="CHEBI:58702"/>
    </ligand>
</feature>
<feature type="binding site" evidence="1">
    <location>
        <position position="312"/>
    </location>
    <ligand>
        <name>3-phosphoshikimate</name>
        <dbReference type="ChEBI" id="CHEBI:145989"/>
    </ligand>
</feature>
<feature type="binding site" evidence="1">
    <location>
        <position position="339"/>
    </location>
    <ligand>
        <name>3-phosphoshikimate</name>
        <dbReference type="ChEBI" id="CHEBI:145989"/>
    </ligand>
</feature>
<feature type="binding site" evidence="1">
    <location>
        <position position="343"/>
    </location>
    <ligand>
        <name>phosphoenolpyruvate</name>
        <dbReference type="ChEBI" id="CHEBI:58702"/>
    </ligand>
</feature>
<feature type="binding site" evidence="1">
    <location>
        <position position="386"/>
    </location>
    <ligand>
        <name>phosphoenolpyruvate</name>
        <dbReference type="ChEBI" id="CHEBI:58702"/>
    </ligand>
</feature>
<organism>
    <name type="scientific">Bacillus velezensis (strain DSM 23117 / BGSC 10A6 / LMG 26770 / FZB42)</name>
    <name type="common">Bacillus amyloliquefaciens subsp. plantarum</name>
    <dbReference type="NCBI Taxonomy" id="326423"/>
    <lineage>
        <taxon>Bacteria</taxon>
        <taxon>Bacillati</taxon>
        <taxon>Bacillota</taxon>
        <taxon>Bacilli</taxon>
        <taxon>Bacillales</taxon>
        <taxon>Bacillaceae</taxon>
        <taxon>Bacillus</taxon>
        <taxon>Bacillus amyloliquefaciens group</taxon>
    </lineage>
</organism>
<accession>A7Z612</accession>
<proteinExistence type="inferred from homology"/>
<keyword id="KW-0028">Amino-acid biosynthesis</keyword>
<keyword id="KW-0057">Aromatic amino acid biosynthesis</keyword>
<keyword id="KW-0963">Cytoplasm</keyword>
<keyword id="KW-0808">Transferase</keyword>
<sequence>MKREKVTSLNGEIHIPGDKSISHRSVMFGALAEGTTTVKNFLPGADCLSTIACFRKMGVSIEQNGSDVTIYGKGIDALCEPDSLLDVGNSGTTIRLMLGILAGRPFHSTVAGDESIAKRPMKRVTEPLKQMGAAIDGRADGGFTPLSVRGGQLKGIDYVSPVASAQIKSAVLLAGLQAEGTTTVTEPHKSRDHTERMLNAFGAELAETETSASVTGGQKLRGADIFVPGDISSAAFFLAAGAVVPGSRIVLKNVGLNPTRTGMIDVLKQMGASLEVIPSEADSAEPYGDLVIETSALKAAEIGGEIIPRLIDEIPIIALLATQAEGTTVIKDAAELKVKETNRIDTVVSELRKIGADIEPTEDGMKIHGKKTLAGGADVSSHGDHRIGMMLGVASCLTEEPIDIRDTEAIHVSYPTFFEHLDQLAKKA</sequence>
<dbReference type="EC" id="2.5.1.19" evidence="1"/>
<dbReference type="EMBL" id="CP000560">
    <property type="protein sequence ID" value="ABS74438.1"/>
    <property type="molecule type" value="Genomic_DNA"/>
</dbReference>
<dbReference type="RefSeq" id="WP_012117854.1">
    <property type="nucleotide sequence ID" value="NC_009725.2"/>
</dbReference>
<dbReference type="SMR" id="A7Z612"/>
<dbReference type="GeneID" id="93081211"/>
<dbReference type="KEGG" id="bay:RBAM_020760"/>
<dbReference type="HOGENOM" id="CLU_024321_0_1_9"/>
<dbReference type="UniPathway" id="UPA00053">
    <property type="reaction ID" value="UER00089"/>
</dbReference>
<dbReference type="Proteomes" id="UP000001120">
    <property type="component" value="Chromosome"/>
</dbReference>
<dbReference type="GO" id="GO:0005737">
    <property type="term" value="C:cytoplasm"/>
    <property type="evidence" value="ECO:0007669"/>
    <property type="project" value="UniProtKB-SubCell"/>
</dbReference>
<dbReference type="GO" id="GO:0003866">
    <property type="term" value="F:3-phosphoshikimate 1-carboxyvinyltransferase activity"/>
    <property type="evidence" value="ECO:0007669"/>
    <property type="project" value="UniProtKB-UniRule"/>
</dbReference>
<dbReference type="GO" id="GO:0008652">
    <property type="term" value="P:amino acid biosynthetic process"/>
    <property type="evidence" value="ECO:0007669"/>
    <property type="project" value="UniProtKB-KW"/>
</dbReference>
<dbReference type="GO" id="GO:0009073">
    <property type="term" value="P:aromatic amino acid family biosynthetic process"/>
    <property type="evidence" value="ECO:0007669"/>
    <property type="project" value="UniProtKB-KW"/>
</dbReference>
<dbReference type="GO" id="GO:0009423">
    <property type="term" value="P:chorismate biosynthetic process"/>
    <property type="evidence" value="ECO:0007669"/>
    <property type="project" value="UniProtKB-UniRule"/>
</dbReference>
<dbReference type="CDD" id="cd01556">
    <property type="entry name" value="EPSP_synthase"/>
    <property type="match status" value="1"/>
</dbReference>
<dbReference type="FunFam" id="3.65.10.10:FF:000005">
    <property type="entry name" value="3-phosphoshikimate 1-carboxyvinyltransferase"/>
    <property type="match status" value="1"/>
</dbReference>
<dbReference type="FunFam" id="3.65.10.10:FF:000006">
    <property type="entry name" value="3-phosphoshikimate 1-carboxyvinyltransferase"/>
    <property type="match status" value="1"/>
</dbReference>
<dbReference type="Gene3D" id="3.65.10.10">
    <property type="entry name" value="Enolpyruvate transferase domain"/>
    <property type="match status" value="2"/>
</dbReference>
<dbReference type="HAMAP" id="MF_00210">
    <property type="entry name" value="EPSP_synth"/>
    <property type="match status" value="1"/>
</dbReference>
<dbReference type="InterPro" id="IPR001986">
    <property type="entry name" value="Enolpyruvate_Tfrase_dom"/>
</dbReference>
<dbReference type="InterPro" id="IPR036968">
    <property type="entry name" value="Enolpyruvate_Tfrase_sf"/>
</dbReference>
<dbReference type="InterPro" id="IPR006264">
    <property type="entry name" value="EPSP_synthase"/>
</dbReference>
<dbReference type="InterPro" id="IPR023193">
    <property type="entry name" value="EPSP_synthase_CS"/>
</dbReference>
<dbReference type="InterPro" id="IPR013792">
    <property type="entry name" value="RNA3'P_cycl/enolpyr_Trfase_a/b"/>
</dbReference>
<dbReference type="NCBIfam" id="TIGR01356">
    <property type="entry name" value="aroA"/>
    <property type="match status" value="1"/>
</dbReference>
<dbReference type="PANTHER" id="PTHR21090">
    <property type="entry name" value="AROM/DEHYDROQUINATE SYNTHASE"/>
    <property type="match status" value="1"/>
</dbReference>
<dbReference type="PANTHER" id="PTHR21090:SF5">
    <property type="entry name" value="PENTAFUNCTIONAL AROM POLYPEPTIDE"/>
    <property type="match status" value="1"/>
</dbReference>
<dbReference type="Pfam" id="PF00275">
    <property type="entry name" value="EPSP_synthase"/>
    <property type="match status" value="1"/>
</dbReference>
<dbReference type="PIRSF" id="PIRSF000505">
    <property type="entry name" value="EPSPS"/>
    <property type="match status" value="1"/>
</dbReference>
<dbReference type="SUPFAM" id="SSF55205">
    <property type="entry name" value="EPT/RTPC-like"/>
    <property type="match status" value="1"/>
</dbReference>
<dbReference type="PROSITE" id="PS00104">
    <property type="entry name" value="EPSP_SYNTHASE_1"/>
    <property type="match status" value="1"/>
</dbReference>
<dbReference type="PROSITE" id="PS00885">
    <property type="entry name" value="EPSP_SYNTHASE_2"/>
    <property type="match status" value="1"/>
</dbReference>
<protein>
    <recommendedName>
        <fullName evidence="1">3-phosphoshikimate 1-carboxyvinyltransferase</fullName>
        <ecNumber evidence="1">2.5.1.19</ecNumber>
    </recommendedName>
    <alternativeName>
        <fullName evidence="1">5-enolpyruvylshikimate-3-phosphate synthase</fullName>
        <shortName evidence="1">EPSP synthase</shortName>
        <shortName evidence="1">EPSPS</shortName>
    </alternativeName>
</protein>
<comment type="function">
    <text evidence="1">Catalyzes the transfer of the enolpyruvyl moiety of phosphoenolpyruvate (PEP) to the 5-hydroxyl of shikimate-3-phosphate (S3P) to produce enolpyruvyl shikimate-3-phosphate and inorganic phosphate.</text>
</comment>
<comment type="catalytic activity">
    <reaction evidence="1">
        <text>3-phosphoshikimate + phosphoenolpyruvate = 5-O-(1-carboxyvinyl)-3-phosphoshikimate + phosphate</text>
        <dbReference type="Rhea" id="RHEA:21256"/>
        <dbReference type="ChEBI" id="CHEBI:43474"/>
        <dbReference type="ChEBI" id="CHEBI:57701"/>
        <dbReference type="ChEBI" id="CHEBI:58702"/>
        <dbReference type="ChEBI" id="CHEBI:145989"/>
        <dbReference type="EC" id="2.5.1.19"/>
    </reaction>
    <physiologicalReaction direction="left-to-right" evidence="1">
        <dbReference type="Rhea" id="RHEA:21257"/>
    </physiologicalReaction>
</comment>
<comment type="pathway">
    <text evidence="1">Metabolic intermediate biosynthesis; chorismate biosynthesis; chorismate from D-erythrose 4-phosphate and phosphoenolpyruvate: step 6/7.</text>
</comment>
<comment type="subunit">
    <text evidence="1">Monomer.</text>
</comment>
<comment type="subcellular location">
    <subcellularLocation>
        <location evidence="1">Cytoplasm</location>
    </subcellularLocation>
</comment>
<comment type="similarity">
    <text evidence="1">Belongs to the EPSP synthase family.</text>
</comment>
<name>AROA_BACVZ</name>
<gene>
    <name evidence="1" type="primary">aroA</name>
    <name type="ordered locus">RBAM_020760</name>
</gene>